<gene>
    <name type="ORF">ORF120</name>
</gene>
<feature type="chain" id="PRO_0000133060" description="Uncharacterized 9.3 kDa protein">
    <location>
        <begin position="1"/>
        <end position="82"/>
    </location>
</feature>
<dbReference type="EMBL" id="U75930">
    <property type="protein sequence ID" value="AAC59119.1"/>
    <property type="molecule type" value="Genomic_DNA"/>
</dbReference>
<dbReference type="RefSeq" id="NP_046276.1">
    <property type="nucleotide sequence ID" value="NC_001875.2"/>
</dbReference>
<dbReference type="SMR" id="O10359"/>
<dbReference type="KEGG" id="vg:912017"/>
<dbReference type="OrthoDB" id="24327at10239"/>
<dbReference type="Proteomes" id="UP000009248">
    <property type="component" value="Genome"/>
</dbReference>
<dbReference type="InterPro" id="IPR020123">
    <property type="entry name" value="DUF5475"/>
</dbReference>
<dbReference type="Pfam" id="PF17569">
    <property type="entry name" value="DUF5475"/>
    <property type="match status" value="1"/>
</dbReference>
<protein>
    <recommendedName>
        <fullName>Uncharacterized 9.3 kDa protein</fullName>
    </recommendedName>
</protein>
<organismHost>
    <name type="scientific">Orgyia pseudotsugata</name>
    <name type="common">Douglas-fir tussock moth</name>
    <dbReference type="NCBI Taxonomy" id="33414"/>
</organismHost>
<accession>O10359</accession>
<sequence>MSMAQVVEACKLHAVFAKLGYLFRARVCLDIALANLKQLRQRVAIPQVANMLAKKEAQCCLLREKLNTQIDNRSLIKLYKIA</sequence>
<organism>
    <name type="scientific">Orgyia pseudotsugata multicapsid polyhedrosis virus</name>
    <name type="common">OpMNPV</name>
    <dbReference type="NCBI Taxonomy" id="262177"/>
    <lineage>
        <taxon>Viruses</taxon>
        <taxon>Viruses incertae sedis</taxon>
        <taxon>Naldaviricetes</taxon>
        <taxon>Lefavirales</taxon>
        <taxon>Baculoviridae</taxon>
        <taxon>Alphabaculovirus</taxon>
        <taxon>Alphabaculovirus orpseudotsugatae</taxon>
    </lineage>
</organism>
<name>Y120_NPVOP</name>
<reference key="1">
    <citation type="journal article" date="1997" name="Virology">
        <title>The sequence of the Orgyia pseudotsugata multinucleocapsid nuclear polyhedrosis virus genome.</title>
        <authorList>
            <person name="Ahrens C.H."/>
            <person name="Russell R.R."/>
            <person name="Funk C.J."/>
            <person name="Evans J."/>
            <person name="Harwood S."/>
            <person name="Rohrmann G.F."/>
        </authorList>
    </citation>
    <scope>NUCLEOTIDE SEQUENCE [LARGE SCALE GENOMIC DNA]</scope>
</reference>
<keyword id="KW-1185">Reference proteome</keyword>
<proteinExistence type="predicted"/>